<gene>
    <name type="primary">EDF1</name>
    <name type="ORF">RCJMB04_2j2</name>
</gene>
<name>EDF1_CHICK</name>
<proteinExistence type="evidence at transcript level"/>
<feature type="chain" id="PRO_0000149798" description="Endothelial differentiation-related factor 1 homolog">
    <location>
        <begin position="1"/>
        <end position="148"/>
    </location>
</feature>
<feature type="domain" description="HTH cro/C1-type" evidence="2">
    <location>
        <begin position="81"/>
        <end position="135"/>
    </location>
</feature>
<feature type="DNA-binding region" description="H-T-H motif" evidence="2">
    <location>
        <begin position="92"/>
        <end position="111"/>
    </location>
</feature>
<feature type="region of interest" description="Disordered" evidence="3">
    <location>
        <begin position="1"/>
        <end position="26"/>
    </location>
</feature>
<comment type="function">
    <text evidence="1">Probable transcriptional coactivator.</text>
</comment>
<comment type="subcellular location">
    <subcellularLocation>
        <location evidence="1">Nucleus</location>
    </subcellularLocation>
</comment>
<reference key="1">
    <citation type="journal article" date="2005" name="Genome Biol.">
        <title>Full-length cDNAs from chicken bursal lymphocytes to facilitate gene function analysis.</title>
        <authorList>
            <person name="Caldwell R.B."/>
            <person name="Kierzek A.M."/>
            <person name="Arakawa H."/>
            <person name="Bezzubov Y."/>
            <person name="Zaim J."/>
            <person name="Fiedler P."/>
            <person name="Kutter S."/>
            <person name="Blagodatski A."/>
            <person name="Kostovska D."/>
            <person name="Koter M."/>
            <person name="Plachy J."/>
            <person name="Carninci P."/>
            <person name="Hayashizaki Y."/>
            <person name="Buerstedde J.-M."/>
        </authorList>
    </citation>
    <scope>NUCLEOTIDE SEQUENCE [LARGE SCALE MRNA]</scope>
    <source>
        <strain>CB</strain>
        <tissue>Bursa of Fabricius</tissue>
    </source>
</reference>
<keyword id="KW-0010">Activator</keyword>
<keyword id="KW-0238">DNA-binding</keyword>
<keyword id="KW-0539">Nucleus</keyword>
<keyword id="KW-1185">Reference proteome</keyword>
<keyword id="KW-0804">Transcription</keyword>
<keyword id="KW-0805">Transcription regulation</keyword>
<evidence type="ECO:0000250" key="1"/>
<evidence type="ECO:0000255" key="2">
    <source>
        <dbReference type="PROSITE-ProRule" id="PRU00257"/>
    </source>
</evidence>
<evidence type="ECO:0000256" key="3">
    <source>
        <dbReference type="SAM" id="MobiDB-lite"/>
    </source>
</evidence>
<dbReference type="EMBL" id="AJ719464">
    <property type="protein sequence ID" value="CAG31123.1"/>
    <property type="molecule type" value="mRNA"/>
</dbReference>
<dbReference type="RefSeq" id="NP_001006203.1">
    <property type="nucleotide sequence ID" value="NM_001006203.2"/>
</dbReference>
<dbReference type="SMR" id="Q5ZMC0"/>
<dbReference type="FunCoup" id="Q5ZMC0">
    <property type="interactions" value="2587"/>
</dbReference>
<dbReference type="STRING" id="9031.ENSGALP00000058327"/>
<dbReference type="PaxDb" id="9031-ENSGALP00000014641"/>
<dbReference type="Ensembl" id="ENSGALT00010068924.1">
    <property type="protein sequence ID" value="ENSGALP00010042366.1"/>
    <property type="gene ID" value="ENSGALG00010028462.1"/>
</dbReference>
<dbReference type="GeneID" id="417286"/>
<dbReference type="KEGG" id="gga:417286"/>
<dbReference type="CTD" id="8721"/>
<dbReference type="VEuPathDB" id="HostDB:geneid_417286"/>
<dbReference type="eggNOG" id="KOG3398">
    <property type="taxonomic scope" value="Eukaryota"/>
</dbReference>
<dbReference type="GeneTree" id="ENSGT00390000008519"/>
<dbReference type="HOGENOM" id="CLU_112609_0_1_1"/>
<dbReference type="InParanoid" id="Q5ZMC0"/>
<dbReference type="OMA" id="GKNKSCK"/>
<dbReference type="OrthoDB" id="10253401at2759"/>
<dbReference type="PhylomeDB" id="Q5ZMC0"/>
<dbReference type="TreeFam" id="TF300064"/>
<dbReference type="PRO" id="PR:Q5ZMC0"/>
<dbReference type="Proteomes" id="UP000000539">
    <property type="component" value="Chromosome 17"/>
</dbReference>
<dbReference type="Bgee" id="ENSGALG00000038003">
    <property type="expression patterns" value="Expressed in lung and 14 other cell types or tissues"/>
</dbReference>
<dbReference type="GO" id="GO:0005634">
    <property type="term" value="C:nucleus"/>
    <property type="evidence" value="ECO:0000318"/>
    <property type="project" value="GO_Central"/>
</dbReference>
<dbReference type="GO" id="GO:0003677">
    <property type="term" value="F:DNA binding"/>
    <property type="evidence" value="ECO:0007669"/>
    <property type="project" value="UniProtKB-KW"/>
</dbReference>
<dbReference type="CDD" id="cd00093">
    <property type="entry name" value="HTH_XRE"/>
    <property type="match status" value="1"/>
</dbReference>
<dbReference type="FunFam" id="1.10.260.40:FF:000015">
    <property type="entry name" value="Endothelial differentiation-related factor 1"/>
    <property type="match status" value="1"/>
</dbReference>
<dbReference type="Gene3D" id="1.10.260.40">
    <property type="entry name" value="lambda repressor-like DNA-binding domains"/>
    <property type="match status" value="1"/>
</dbReference>
<dbReference type="InterPro" id="IPR001387">
    <property type="entry name" value="Cro/C1-type_HTH"/>
</dbReference>
<dbReference type="InterPro" id="IPR010982">
    <property type="entry name" value="Lambda_DNA-bd_dom_sf"/>
</dbReference>
<dbReference type="InterPro" id="IPR013729">
    <property type="entry name" value="MBF1_N"/>
</dbReference>
<dbReference type="PANTHER" id="PTHR10245:SF15">
    <property type="entry name" value="ENDOTHELIAL DIFFERENTIATION-RELATED FACTOR 1"/>
    <property type="match status" value="1"/>
</dbReference>
<dbReference type="PANTHER" id="PTHR10245">
    <property type="entry name" value="ENDOTHELIAL DIFFERENTIATION-RELATED FACTOR 1 MULTIPROTEIN BRIDGING FACTOR 1"/>
    <property type="match status" value="1"/>
</dbReference>
<dbReference type="Pfam" id="PF01381">
    <property type="entry name" value="HTH_3"/>
    <property type="match status" value="1"/>
</dbReference>
<dbReference type="Pfam" id="PF08523">
    <property type="entry name" value="MBF1"/>
    <property type="match status" value="1"/>
</dbReference>
<dbReference type="SMART" id="SM00530">
    <property type="entry name" value="HTH_XRE"/>
    <property type="match status" value="1"/>
</dbReference>
<dbReference type="SUPFAM" id="SSF47413">
    <property type="entry name" value="lambda repressor-like DNA-binding domains"/>
    <property type="match status" value="1"/>
</dbReference>
<dbReference type="PROSITE" id="PS50943">
    <property type="entry name" value="HTH_CROC1"/>
    <property type="match status" value="1"/>
</dbReference>
<organism>
    <name type="scientific">Gallus gallus</name>
    <name type="common">Chicken</name>
    <dbReference type="NCBI Taxonomy" id="9031"/>
    <lineage>
        <taxon>Eukaryota</taxon>
        <taxon>Metazoa</taxon>
        <taxon>Chordata</taxon>
        <taxon>Craniata</taxon>
        <taxon>Vertebrata</taxon>
        <taxon>Euteleostomi</taxon>
        <taxon>Archelosauria</taxon>
        <taxon>Archosauria</taxon>
        <taxon>Dinosauria</taxon>
        <taxon>Saurischia</taxon>
        <taxon>Theropoda</taxon>
        <taxon>Coelurosauria</taxon>
        <taxon>Aves</taxon>
        <taxon>Neognathae</taxon>
        <taxon>Galloanserae</taxon>
        <taxon>Galliformes</taxon>
        <taxon>Phasianidae</taxon>
        <taxon>Phasianinae</taxon>
        <taxon>Gallus</taxon>
    </lineage>
</organism>
<protein>
    <recommendedName>
        <fullName>Endothelial differentiation-related factor 1 homolog</fullName>
        <shortName>EDF-1</shortName>
    </recommendedName>
</protein>
<accession>Q5ZMC0</accession>
<sequence length="148" mass="16364">MAESDWDTVTVLRKKGPSAAQAKSKQAVLAAQRRGEDVETSKKWAAGQNKQHFITKNTAKLDRETEELHHDRVPLEVGKVIQQGRQSKGMTQKDLATKINEKPQVIADYESGRAIPNNQVMGKIERAIGLKLRGKDIGKPLETGPKGK</sequence>